<keyword id="KW-0066">ATP synthesis</keyword>
<keyword id="KW-0067">ATP-binding</keyword>
<keyword id="KW-1003">Cell membrane</keyword>
<keyword id="KW-0139">CF(1)</keyword>
<keyword id="KW-0375">Hydrogen ion transport</keyword>
<keyword id="KW-0406">Ion transport</keyword>
<keyword id="KW-0472">Membrane</keyword>
<keyword id="KW-0547">Nucleotide-binding</keyword>
<keyword id="KW-1278">Translocase</keyword>
<keyword id="KW-0813">Transport</keyword>
<gene>
    <name evidence="1" type="primary">atpA</name>
    <name type="ordered locus">SZO_11650</name>
</gene>
<proteinExistence type="inferred from homology"/>
<sequence length="501" mass="54676">MAINAQEISALIKKQIENFQPNFDVTETGVVTYIGDGIARARGLDNAMSGELLEFSNGTFGMAQNLESNDVGIIILGDFSTIREGDEVKRTGKIMEVPVGEALIGRVVNPLGQPVDGLGDIETTGFRPVETPAPGVMQRKSVFEPLQTGLKAIDALVPIGRGQRELIIGDRQTGKTSVAIDAILNQKGQDMICIYVAIGQKESTVRTQVETLRRYGALDYTIVVTASASQPSPLLFIAPYAGVAMAEEFMYNGKHVLIVYDDLSKQAVAYRELSLLLRRPPGREAYPGDVFYLHSRLLERSAKVSDDLGGGSITALPFIETQAGDISAYIATNVISITDGQIFLQEDLFNSGIRPAIDAGSSVSRVGGSAQIKAMKRVAGTLRLDLASYRELEAFTQFGSDLDAATQAKLNRGRRTVEILKQPLHKPLPVEKQVVILYALTHGFLDDVPVDDILAFEEALYDYFDAHYDHLFETIRTTKDLPQEAELDAAIQAFKAQSNFK</sequence>
<feature type="chain" id="PRO_1000214818" description="ATP synthase subunit alpha">
    <location>
        <begin position="1"/>
        <end position="501"/>
    </location>
</feature>
<feature type="binding site" evidence="1">
    <location>
        <begin position="169"/>
        <end position="176"/>
    </location>
    <ligand>
        <name>ATP</name>
        <dbReference type="ChEBI" id="CHEBI:30616"/>
    </ligand>
</feature>
<feature type="site" description="Required for activity" evidence="1">
    <location>
        <position position="362"/>
    </location>
</feature>
<reference key="1">
    <citation type="journal article" date="2009" name="PLoS Pathog.">
        <title>Genomic evidence for the evolution of Streptococcus equi: host restriction, increased virulence, and genetic exchange with human pathogens.</title>
        <authorList>
            <person name="Holden M.T.G."/>
            <person name="Heather Z."/>
            <person name="Paillot R."/>
            <person name="Steward K.F."/>
            <person name="Webb K."/>
            <person name="Ainslie F."/>
            <person name="Jourdan T."/>
            <person name="Bason N.C."/>
            <person name="Holroyd N.E."/>
            <person name="Mungall K."/>
            <person name="Quail M.A."/>
            <person name="Sanders M."/>
            <person name="Simmonds M."/>
            <person name="Willey D."/>
            <person name="Brooks K."/>
            <person name="Aanensen D.M."/>
            <person name="Spratt B.G."/>
            <person name="Jolley K.A."/>
            <person name="Maiden M.C.J."/>
            <person name="Kehoe M."/>
            <person name="Chanter N."/>
            <person name="Bentley S.D."/>
            <person name="Robinson C."/>
            <person name="Maskell D.J."/>
            <person name="Parkhill J."/>
            <person name="Waller A.S."/>
        </authorList>
    </citation>
    <scope>NUCLEOTIDE SEQUENCE [LARGE SCALE GENOMIC DNA]</scope>
    <source>
        <strain>H70</strain>
    </source>
</reference>
<comment type="function">
    <text evidence="1">Produces ATP from ADP in the presence of a proton gradient across the membrane. The alpha chain is a regulatory subunit.</text>
</comment>
<comment type="catalytic activity">
    <reaction evidence="1">
        <text>ATP + H2O + 4 H(+)(in) = ADP + phosphate + 5 H(+)(out)</text>
        <dbReference type="Rhea" id="RHEA:57720"/>
        <dbReference type="ChEBI" id="CHEBI:15377"/>
        <dbReference type="ChEBI" id="CHEBI:15378"/>
        <dbReference type="ChEBI" id="CHEBI:30616"/>
        <dbReference type="ChEBI" id="CHEBI:43474"/>
        <dbReference type="ChEBI" id="CHEBI:456216"/>
        <dbReference type="EC" id="7.1.2.2"/>
    </reaction>
</comment>
<comment type="subunit">
    <text evidence="1">F-type ATPases have 2 components, CF(1) - the catalytic core - and CF(0) - the membrane proton channel. CF(1) has five subunits: alpha(3), beta(3), gamma(1), delta(1), epsilon(1). CF(0) has three main subunits: a(1), b(2) and c(9-12). The alpha and beta chains form an alternating ring which encloses part of the gamma chain. CF(1) is attached to CF(0) by a central stalk formed by the gamma and epsilon chains, while a peripheral stalk is formed by the delta and b chains.</text>
</comment>
<comment type="subcellular location">
    <subcellularLocation>
        <location evidence="1">Cell membrane</location>
        <topology evidence="1">Peripheral membrane protein</topology>
    </subcellularLocation>
</comment>
<comment type="similarity">
    <text evidence="1">Belongs to the ATPase alpha/beta chains family.</text>
</comment>
<accession>C0MH19</accession>
<organism>
    <name type="scientific">Streptococcus equi subsp. zooepidemicus (strain H70)</name>
    <dbReference type="NCBI Taxonomy" id="553483"/>
    <lineage>
        <taxon>Bacteria</taxon>
        <taxon>Bacillati</taxon>
        <taxon>Bacillota</taxon>
        <taxon>Bacilli</taxon>
        <taxon>Lactobacillales</taxon>
        <taxon>Streptococcaceae</taxon>
        <taxon>Streptococcus</taxon>
    </lineage>
</organism>
<name>ATPA_STRS7</name>
<protein>
    <recommendedName>
        <fullName evidence="1">ATP synthase subunit alpha</fullName>
        <ecNumber evidence="1">7.1.2.2</ecNumber>
    </recommendedName>
    <alternativeName>
        <fullName evidence="1">ATP synthase F1 sector subunit alpha</fullName>
    </alternativeName>
    <alternativeName>
        <fullName evidence="1">F-ATPase subunit alpha</fullName>
    </alternativeName>
</protein>
<evidence type="ECO:0000255" key="1">
    <source>
        <dbReference type="HAMAP-Rule" id="MF_01346"/>
    </source>
</evidence>
<dbReference type="EC" id="7.1.2.2" evidence="1"/>
<dbReference type="EMBL" id="FM204884">
    <property type="protein sequence ID" value="CAW99605.1"/>
    <property type="molecule type" value="Genomic_DNA"/>
</dbReference>
<dbReference type="SMR" id="C0MH19"/>
<dbReference type="KEGG" id="seq:SZO_11650"/>
<dbReference type="eggNOG" id="COG0056">
    <property type="taxonomic scope" value="Bacteria"/>
</dbReference>
<dbReference type="HOGENOM" id="CLU_010091_2_1_9"/>
<dbReference type="Proteomes" id="UP000001368">
    <property type="component" value="Chromosome"/>
</dbReference>
<dbReference type="GO" id="GO:0005886">
    <property type="term" value="C:plasma membrane"/>
    <property type="evidence" value="ECO:0007669"/>
    <property type="project" value="UniProtKB-SubCell"/>
</dbReference>
<dbReference type="GO" id="GO:0045259">
    <property type="term" value="C:proton-transporting ATP synthase complex"/>
    <property type="evidence" value="ECO:0007669"/>
    <property type="project" value="UniProtKB-KW"/>
</dbReference>
<dbReference type="GO" id="GO:0043531">
    <property type="term" value="F:ADP binding"/>
    <property type="evidence" value="ECO:0007669"/>
    <property type="project" value="TreeGrafter"/>
</dbReference>
<dbReference type="GO" id="GO:0005524">
    <property type="term" value="F:ATP binding"/>
    <property type="evidence" value="ECO:0007669"/>
    <property type="project" value="UniProtKB-UniRule"/>
</dbReference>
<dbReference type="GO" id="GO:0046933">
    <property type="term" value="F:proton-transporting ATP synthase activity, rotational mechanism"/>
    <property type="evidence" value="ECO:0007669"/>
    <property type="project" value="UniProtKB-UniRule"/>
</dbReference>
<dbReference type="CDD" id="cd18113">
    <property type="entry name" value="ATP-synt_F1_alpha_C"/>
    <property type="match status" value="1"/>
</dbReference>
<dbReference type="CDD" id="cd18116">
    <property type="entry name" value="ATP-synt_F1_alpha_N"/>
    <property type="match status" value="1"/>
</dbReference>
<dbReference type="CDD" id="cd01132">
    <property type="entry name" value="F1-ATPase_alpha_CD"/>
    <property type="match status" value="1"/>
</dbReference>
<dbReference type="FunFam" id="1.20.150.20:FF:000001">
    <property type="entry name" value="ATP synthase subunit alpha"/>
    <property type="match status" value="1"/>
</dbReference>
<dbReference type="FunFam" id="2.40.30.20:FF:000001">
    <property type="entry name" value="ATP synthase subunit alpha"/>
    <property type="match status" value="1"/>
</dbReference>
<dbReference type="FunFam" id="3.40.50.300:FF:000002">
    <property type="entry name" value="ATP synthase subunit alpha"/>
    <property type="match status" value="1"/>
</dbReference>
<dbReference type="Gene3D" id="2.40.30.20">
    <property type="match status" value="1"/>
</dbReference>
<dbReference type="Gene3D" id="1.20.150.20">
    <property type="entry name" value="ATP synthase alpha/beta chain, C-terminal domain"/>
    <property type="match status" value="1"/>
</dbReference>
<dbReference type="Gene3D" id="3.40.50.300">
    <property type="entry name" value="P-loop containing nucleotide triphosphate hydrolases"/>
    <property type="match status" value="1"/>
</dbReference>
<dbReference type="HAMAP" id="MF_01346">
    <property type="entry name" value="ATP_synth_alpha_bact"/>
    <property type="match status" value="1"/>
</dbReference>
<dbReference type="InterPro" id="IPR023366">
    <property type="entry name" value="ATP_synth_asu-like_sf"/>
</dbReference>
<dbReference type="InterPro" id="IPR000793">
    <property type="entry name" value="ATP_synth_asu_C"/>
</dbReference>
<dbReference type="InterPro" id="IPR038376">
    <property type="entry name" value="ATP_synth_asu_C_sf"/>
</dbReference>
<dbReference type="InterPro" id="IPR033732">
    <property type="entry name" value="ATP_synth_F1_a_nt-bd_dom"/>
</dbReference>
<dbReference type="InterPro" id="IPR005294">
    <property type="entry name" value="ATP_synth_F1_asu"/>
</dbReference>
<dbReference type="InterPro" id="IPR004100">
    <property type="entry name" value="ATPase_F1/V1/A1_a/bsu_N"/>
</dbReference>
<dbReference type="InterPro" id="IPR036121">
    <property type="entry name" value="ATPase_F1/V1/A1_a/bsu_N_sf"/>
</dbReference>
<dbReference type="InterPro" id="IPR000194">
    <property type="entry name" value="ATPase_F1/V1/A1_a/bsu_nucl-bd"/>
</dbReference>
<dbReference type="InterPro" id="IPR027417">
    <property type="entry name" value="P-loop_NTPase"/>
</dbReference>
<dbReference type="NCBIfam" id="TIGR00962">
    <property type="entry name" value="atpA"/>
    <property type="match status" value="1"/>
</dbReference>
<dbReference type="NCBIfam" id="NF009884">
    <property type="entry name" value="PRK13343.1"/>
    <property type="match status" value="1"/>
</dbReference>
<dbReference type="PANTHER" id="PTHR48082">
    <property type="entry name" value="ATP SYNTHASE SUBUNIT ALPHA, MITOCHONDRIAL"/>
    <property type="match status" value="1"/>
</dbReference>
<dbReference type="PANTHER" id="PTHR48082:SF2">
    <property type="entry name" value="ATP SYNTHASE SUBUNIT ALPHA, MITOCHONDRIAL"/>
    <property type="match status" value="1"/>
</dbReference>
<dbReference type="Pfam" id="PF00006">
    <property type="entry name" value="ATP-synt_ab"/>
    <property type="match status" value="1"/>
</dbReference>
<dbReference type="Pfam" id="PF00306">
    <property type="entry name" value="ATP-synt_ab_C"/>
    <property type="match status" value="1"/>
</dbReference>
<dbReference type="Pfam" id="PF02874">
    <property type="entry name" value="ATP-synt_ab_N"/>
    <property type="match status" value="1"/>
</dbReference>
<dbReference type="PIRSF" id="PIRSF039088">
    <property type="entry name" value="F_ATPase_subunit_alpha"/>
    <property type="match status" value="1"/>
</dbReference>
<dbReference type="SUPFAM" id="SSF47917">
    <property type="entry name" value="C-terminal domain of alpha and beta subunits of F1 ATP synthase"/>
    <property type="match status" value="1"/>
</dbReference>
<dbReference type="SUPFAM" id="SSF50615">
    <property type="entry name" value="N-terminal domain of alpha and beta subunits of F1 ATP synthase"/>
    <property type="match status" value="1"/>
</dbReference>
<dbReference type="SUPFAM" id="SSF52540">
    <property type="entry name" value="P-loop containing nucleoside triphosphate hydrolases"/>
    <property type="match status" value="1"/>
</dbReference>